<keyword id="KW-0150">Chloroplast</keyword>
<keyword id="KW-0934">Plastid</keyword>
<keyword id="KW-0687">Ribonucleoprotein</keyword>
<keyword id="KW-0689">Ribosomal protein</keyword>
<keyword id="KW-0694">RNA-binding</keyword>
<keyword id="KW-0699">rRNA-binding</keyword>
<feature type="chain" id="PRO_0000276916" description="Small ribosomal subunit protein uS19c">
    <location>
        <begin position="1"/>
        <end position="92"/>
    </location>
</feature>
<name>RR19_OLTVI</name>
<organism>
    <name type="scientific">Oltmannsiellopsis viridis</name>
    <name type="common">Marine flagellate</name>
    <name type="synonym">Oltmannsiella viridis</name>
    <dbReference type="NCBI Taxonomy" id="51324"/>
    <lineage>
        <taxon>Eukaryota</taxon>
        <taxon>Viridiplantae</taxon>
        <taxon>Chlorophyta</taxon>
        <taxon>Ulvophyceae</taxon>
        <taxon>Oltmannsiellopsidales</taxon>
        <taxon>Oltmannsiellopsidaceae</taxon>
        <taxon>Oltmannsiellopsis</taxon>
    </lineage>
</organism>
<protein>
    <recommendedName>
        <fullName evidence="1">Small ribosomal subunit protein uS19c</fullName>
    </recommendedName>
    <alternativeName>
        <fullName evidence="2">30S ribosomal protein S19, chloroplastic</fullName>
    </alternativeName>
</protein>
<gene>
    <name evidence="1" type="primary">rps19</name>
</gene>
<proteinExistence type="inferred from homology"/>
<accession>Q20F11</accession>
<reference key="1">
    <citation type="journal article" date="2006" name="BMC Biol.">
        <title>The complete chloroplast DNA sequence of the green alga Oltmannsiellopsis viridis reveals a distinctive quadripartite architecture in the chloroplast genome of early diverging ulvophytes.</title>
        <authorList>
            <person name="Pombert J.-F."/>
            <person name="Lemieux C."/>
            <person name="Turmel M."/>
        </authorList>
    </citation>
    <scope>NUCLEOTIDE SEQUENCE [LARGE SCALE GENOMIC DNA]</scope>
</reference>
<dbReference type="EMBL" id="DQ291132">
    <property type="protein sequence ID" value="ABB81995.1"/>
    <property type="molecule type" value="Genomic_DNA"/>
</dbReference>
<dbReference type="RefSeq" id="YP_635834.1">
    <property type="nucleotide sequence ID" value="NC_008099.1"/>
</dbReference>
<dbReference type="SMR" id="Q20F11"/>
<dbReference type="GeneID" id="4100171"/>
<dbReference type="GO" id="GO:0009507">
    <property type="term" value="C:chloroplast"/>
    <property type="evidence" value="ECO:0007669"/>
    <property type="project" value="UniProtKB-SubCell"/>
</dbReference>
<dbReference type="GO" id="GO:0005763">
    <property type="term" value="C:mitochondrial small ribosomal subunit"/>
    <property type="evidence" value="ECO:0007669"/>
    <property type="project" value="TreeGrafter"/>
</dbReference>
<dbReference type="GO" id="GO:0019843">
    <property type="term" value="F:rRNA binding"/>
    <property type="evidence" value="ECO:0007669"/>
    <property type="project" value="UniProtKB-UniRule"/>
</dbReference>
<dbReference type="GO" id="GO:0003735">
    <property type="term" value="F:structural constituent of ribosome"/>
    <property type="evidence" value="ECO:0007669"/>
    <property type="project" value="InterPro"/>
</dbReference>
<dbReference type="GO" id="GO:0000028">
    <property type="term" value="P:ribosomal small subunit assembly"/>
    <property type="evidence" value="ECO:0007669"/>
    <property type="project" value="TreeGrafter"/>
</dbReference>
<dbReference type="GO" id="GO:0006412">
    <property type="term" value="P:translation"/>
    <property type="evidence" value="ECO:0007669"/>
    <property type="project" value="UniProtKB-UniRule"/>
</dbReference>
<dbReference type="FunFam" id="3.30.860.10:FF:000001">
    <property type="entry name" value="30S ribosomal protein S19"/>
    <property type="match status" value="1"/>
</dbReference>
<dbReference type="Gene3D" id="3.30.860.10">
    <property type="entry name" value="30s Ribosomal Protein S19, Chain A"/>
    <property type="match status" value="1"/>
</dbReference>
<dbReference type="HAMAP" id="MF_00531">
    <property type="entry name" value="Ribosomal_uS19"/>
    <property type="match status" value="1"/>
</dbReference>
<dbReference type="InterPro" id="IPR002222">
    <property type="entry name" value="Ribosomal_uS19"/>
</dbReference>
<dbReference type="InterPro" id="IPR005732">
    <property type="entry name" value="Ribosomal_uS19_bac-type"/>
</dbReference>
<dbReference type="InterPro" id="IPR020934">
    <property type="entry name" value="Ribosomal_uS19_CS"/>
</dbReference>
<dbReference type="InterPro" id="IPR023575">
    <property type="entry name" value="Ribosomal_uS19_SF"/>
</dbReference>
<dbReference type="NCBIfam" id="TIGR01050">
    <property type="entry name" value="rpsS_bact"/>
    <property type="match status" value="1"/>
</dbReference>
<dbReference type="PANTHER" id="PTHR11880">
    <property type="entry name" value="RIBOSOMAL PROTEIN S19P FAMILY MEMBER"/>
    <property type="match status" value="1"/>
</dbReference>
<dbReference type="PANTHER" id="PTHR11880:SF8">
    <property type="entry name" value="SMALL RIBOSOMAL SUBUNIT PROTEIN US19M"/>
    <property type="match status" value="1"/>
</dbReference>
<dbReference type="Pfam" id="PF00203">
    <property type="entry name" value="Ribosomal_S19"/>
    <property type="match status" value="1"/>
</dbReference>
<dbReference type="PIRSF" id="PIRSF002144">
    <property type="entry name" value="Ribosomal_S19"/>
    <property type="match status" value="1"/>
</dbReference>
<dbReference type="PRINTS" id="PR00975">
    <property type="entry name" value="RIBOSOMALS19"/>
</dbReference>
<dbReference type="SUPFAM" id="SSF54570">
    <property type="entry name" value="Ribosomal protein S19"/>
    <property type="match status" value="1"/>
</dbReference>
<dbReference type="PROSITE" id="PS00323">
    <property type="entry name" value="RIBOSOMAL_S19"/>
    <property type="match status" value="1"/>
</dbReference>
<geneLocation type="chloroplast"/>
<sequence length="92" mass="10369">MSRSLKKGPFVADHLLKKVEKLNAQNDKKVITTWSRASTIVPVMIGHTIAVHNGREHIPVFVTDQMVGHKLGEFAPTRTFRGHKNSDKKAKR</sequence>
<comment type="function">
    <text evidence="1">Protein S19 forms a complex with S13 that binds strongly to the 16S ribosomal RNA.</text>
</comment>
<comment type="subcellular location">
    <subcellularLocation>
        <location>Plastid</location>
        <location>Chloroplast</location>
    </subcellularLocation>
</comment>
<comment type="similarity">
    <text evidence="1">Belongs to the universal ribosomal protein uS19 family.</text>
</comment>
<evidence type="ECO:0000255" key="1">
    <source>
        <dbReference type="HAMAP-Rule" id="MF_00531"/>
    </source>
</evidence>
<evidence type="ECO:0000305" key="2"/>